<proteinExistence type="inferred from homology"/>
<keyword id="KW-0030">Aminoacyl-tRNA synthetase</keyword>
<keyword id="KW-0067">ATP-binding</keyword>
<keyword id="KW-0963">Cytoplasm</keyword>
<keyword id="KW-0436">Ligase</keyword>
<keyword id="KW-0547">Nucleotide-binding</keyword>
<keyword id="KW-0648">Protein biosynthesis</keyword>
<keyword id="KW-1185">Reference proteome</keyword>
<dbReference type="EC" id="6.1.1.2" evidence="1"/>
<dbReference type="EMBL" id="BA000030">
    <property type="protein sequence ID" value="BAC71129.1"/>
    <property type="molecule type" value="Genomic_DNA"/>
</dbReference>
<dbReference type="SMR" id="Q82HU1"/>
<dbReference type="GeneID" id="41540488"/>
<dbReference type="KEGG" id="sma:SAVERM_3417"/>
<dbReference type="eggNOG" id="COG0180">
    <property type="taxonomic scope" value="Bacteria"/>
</dbReference>
<dbReference type="HOGENOM" id="CLU_029244_1_1_11"/>
<dbReference type="OrthoDB" id="9801042at2"/>
<dbReference type="BRENDA" id="6.1.1.2">
    <property type="organism ID" value="5980"/>
</dbReference>
<dbReference type="Proteomes" id="UP000000428">
    <property type="component" value="Chromosome"/>
</dbReference>
<dbReference type="GO" id="GO:0005829">
    <property type="term" value="C:cytosol"/>
    <property type="evidence" value="ECO:0007669"/>
    <property type="project" value="TreeGrafter"/>
</dbReference>
<dbReference type="GO" id="GO:0005524">
    <property type="term" value="F:ATP binding"/>
    <property type="evidence" value="ECO:0007669"/>
    <property type="project" value="UniProtKB-UniRule"/>
</dbReference>
<dbReference type="GO" id="GO:0004830">
    <property type="term" value="F:tryptophan-tRNA ligase activity"/>
    <property type="evidence" value="ECO:0007669"/>
    <property type="project" value="UniProtKB-UniRule"/>
</dbReference>
<dbReference type="GO" id="GO:0006436">
    <property type="term" value="P:tryptophanyl-tRNA aminoacylation"/>
    <property type="evidence" value="ECO:0007669"/>
    <property type="project" value="UniProtKB-UniRule"/>
</dbReference>
<dbReference type="CDD" id="cd00806">
    <property type="entry name" value="TrpRS_core"/>
    <property type="match status" value="1"/>
</dbReference>
<dbReference type="FunFam" id="3.40.50.620:FF:000082">
    <property type="entry name" value="MSW1p Mitochondrial tryptophanyl-tRNA synthetase"/>
    <property type="match status" value="1"/>
</dbReference>
<dbReference type="FunFam" id="1.10.240.10:FF:000002">
    <property type="entry name" value="Tryptophan--tRNA ligase"/>
    <property type="match status" value="1"/>
</dbReference>
<dbReference type="Gene3D" id="3.40.50.620">
    <property type="entry name" value="HUPs"/>
    <property type="match status" value="1"/>
</dbReference>
<dbReference type="Gene3D" id="1.10.240.10">
    <property type="entry name" value="Tyrosyl-Transfer RNA Synthetase"/>
    <property type="match status" value="1"/>
</dbReference>
<dbReference type="HAMAP" id="MF_00140_B">
    <property type="entry name" value="Trp_tRNA_synth_B"/>
    <property type="match status" value="1"/>
</dbReference>
<dbReference type="InterPro" id="IPR001412">
    <property type="entry name" value="aa-tRNA-synth_I_CS"/>
</dbReference>
<dbReference type="InterPro" id="IPR002305">
    <property type="entry name" value="aa-tRNA-synth_Ic"/>
</dbReference>
<dbReference type="InterPro" id="IPR014729">
    <property type="entry name" value="Rossmann-like_a/b/a_fold"/>
</dbReference>
<dbReference type="InterPro" id="IPR002306">
    <property type="entry name" value="Trp-tRNA-ligase"/>
</dbReference>
<dbReference type="InterPro" id="IPR024109">
    <property type="entry name" value="Trp-tRNA-ligase_bac-type"/>
</dbReference>
<dbReference type="InterPro" id="IPR050203">
    <property type="entry name" value="Trp-tRNA_synthetase"/>
</dbReference>
<dbReference type="NCBIfam" id="TIGR00233">
    <property type="entry name" value="trpS"/>
    <property type="match status" value="1"/>
</dbReference>
<dbReference type="PANTHER" id="PTHR43766">
    <property type="entry name" value="TRYPTOPHAN--TRNA LIGASE, MITOCHONDRIAL"/>
    <property type="match status" value="1"/>
</dbReference>
<dbReference type="PANTHER" id="PTHR43766:SF1">
    <property type="entry name" value="TRYPTOPHAN--TRNA LIGASE, MITOCHONDRIAL"/>
    <property type="match status" value="1"/>
</dbReference>
<dbReference type="Pfam" id="PF00579">
    <property type="entry name" value="tRNA-synt_1b"/>
    <property type="match status" value="1"/>
</dbReference>
<dbReference type="PRINTS" id="PR01039">
    <property type="entry name" value="TRNASYNTHTRP"/>
</dbReference>
<dbReference type="SUPFAM" id="SSF52374">
    <property type="entry name" value="Nucleotidylyl transferase"/>
    <property type="match status" value="1"/>
</dbReference>
<dbReference type="PROSITE" id="PS00178">
    <property type="entry name" value="AA_TRNA_LIGASE_I"/>
    <property type="match status" value="1"/>
</dbReference>
<sequence length="337" mass="37096">MASDRPRVLSGIQPTAGSFHLGNYLGAVRQWVALQESHDAFYMVVDLHAITVPQDPADLRANTRLAAAQLLAAGLDPERCTLFVQSHVPEHAQLAWIMNCLTGFGEASRMTQFKDKSAKQGADRASVGLFTYPVLQVADILLYQANEVPVGEDQRQHIELTRDLAERFNGRFGETFTVPKPYILKETAKIFDLQDPSIKMSKSASTPKGLINLLDEPKATAKKVKSAVTDTDTVIRYDAEHKPGISNLLTIYSTLTGTGIPELEEKYTGKGYGALKTDLAEVMVDFVTPFRERTQQYLDDPETLDSILAKGAEKARAVAAETLSQAYDRVGFLPAKH</sequence>
<gene>
    <name evidence="1" type="primary">trpS2</name>
    <name type="ordered locus">SAV_3417</name>
</gene>
<reference key="1">
    <citation type="journal article" date="2001" name="Proc. Natl. Acad. Sci. U.S.A.">
        <title>Genome sequence of an industrial microorganism Streptomyces avermitilis: deducing the ability of producing secondary metabolites.</title>
        <authorList>
            <person name="Omura S."/>
            <person name="Ikeda H."/>
            <person name="Ishikawa J."/>
            <person name="Hanamoto A."/>
            <person name="Takahashi C."/>
            <person name="Shinose M."/>
            <person name="Takahashi Y."/>
            <person name="Horikawa H."/>
            <person name="Nakazawa H."/>
            <person name="Osonoe T."/>
            <person name="Kikuchi H."/>
            <person name="Shiba T."/>
            <person name="Sakaki Y."/>
            <person name="Hattori M."/>
        </authorList>
    </citation>
    <scope>NUCLEOTIDE SEQUENCE [LARGE SCALE GENOMIC DNA]</scope>
    <source>
        <strain>ATCC 31267 / DSM 46492 / JCM 5070 / NBRC 14893 / NCIMB 12804 / NRRL 8165 / MA-4680</strain>
    </source>
</reference>
<reference key="2">
    <citation type="journal article" date="2003" name="Nat. Biotechnol.">
        <title>Complete genome sequence and comparative analysis of the industrial microorganism Streptomyces avermitilis.</title>
        <authorList>
            <person name="Ikeda H."/>
            <person name="Ishikawa J."/>
            <person name="Hanamoto A."/>
            <person name="Shinose M."/>
            <person name="Kikuchi H."/>
            <person name="Shiba T."/>
            <person name="Sakaki Y."/>
            <person name="Hattori M."/>
            <person name="Omura S."/>
        </authorList>
    </citation>
    <scope>NUCLEOTIDE SEQUENCE [LARGE SCALE GENOMIC DNA]</scope>
    <source>
        <strain>ATCC 31267 / DSM 46492 / JCM 5070 / NBRC 14893 / NCIMB 12804 / NRRL 8165 / MA-4680</strain>
    </source>
</reference>
<accession>Q82HU1</accession>
<feature type="chain" id="PRO_0000136685" description="Tryptophan--tRNA ligase 2">
    <location>
        <begin position="1"/>
        <end position="337"/>
    </location>
</feature>
<feature type="short sequence motif" description="'HIGH' region" evidence="1">
    <location>
        <begin position="14"/>
        <end position="23"/>
    </location>
</feature>
<feature type="short sequence motif" description="'KMSKS' region" evidence="1">
    <location>
        <begin position="199"/>
        <end position="203"/>
    </location>
</feature>
<feature type="binding site" evidence="1">
    <location>
        <begin position="13"/>
        <end position="15"/>
    </location>
    <ligand>
        <name>ATP</name>
        <dbReference type="ChEBI" id="CHEBI:30616"/>
    </ligand>
</feature>
<feature type="binding site" evidence="1">
    <location>
        <begin position="22"/>
        <end position="23"/>
    </location>
    <ligand>
        <name>ATP</name>
        <dbReference type="ChEBI" id="CHEBI:30616"/>
    </ligand>
</feature>
<feature type="binding site" evidence="1">
    <location>
        <position position="139"/>
    </location>
    <ligand>
        <name>L-tryptophan</name>
        <dbReference type="ChEBI" id="CHEBI:57912"/>
    </ligand>
</feature>
<feature type="binding site" evidence="1">
    <location>
        <begin position="151"/>
        <end position="153"/>
    </location>
    <ligand>
        <name>ATP</name>
        <dbReference type="ChEBI" id="CHEBI:30616"/>
    </ligand>
</feature>
<feature type="binding site" evidence="1">
    <location>
        <position position="190"/>
    </location>
    <ligand>
        <name>ATP</name>
        <dbReference type="ChEBI" id="CHEBI:30616"/>
    </ligand>
</feature>
<feature type="binding site" evidence="1">
    <location>
        <begin position="199"/>
        <end position="203"/>
    </location>
    <ligand>
        <name>ATP</name>
        <dbReference type="ChEBI" id="CHEBI:30616"/>
    </ligand>
</feature>
<protein>
    <recommendedName>
        <fullName evidence="1">Tryptophan--tRNA ligase 2</fullName>
        <ecNumber evidence="1">6.1.1.2</ecNumber>
    </recommendedName>
    <alternativeName>
        <fullName evidence="1">Tryptophanyl-tRNA synthetase 2</fullName>
        <shortName evidence="1">TrpRS 2</shortName>
    </alternativeName>
</protein>
<comment type="function">
    <text evidence="1">Catalyzes the attachment of tryptophan to tRNA(Trp).</text>
</comment>
<comment type="catalytic activity">
    <reaction evidence="1">
        <text>tRNA(Trp) + L-tryptophan + ATP = L-tryptophyl-tRNA(Trp) + AMP + diphosphate + H(+)</text>
        <dbReference type="Rhea" id="RHEA:24080"/>
        <dbReference type="Rhea" id="RHEA-COMP:9671"/>
        <dbReference type="Rhea" id="RHEA-COMP:9705"/>
        <dbReference type="ChEBI" id="CHEBI:15378"/>
        <dbReference type="ChEBI" id="CHEBI:30616"/>
        <dbReference type="ChEBI" id="CHEBI:33019"/>
        <dbReference type="ChEBI" id="CHEBI:57912"/>
        <dbReference type="ChEBI" id="CHEBI:78442"/>
        <dbReference type="ChEBI" id="CHEBI:78535"/>
        <dbReference type="ChEBI" id="CHEBI:456215"/>
        <dbReference type="EC" id="6.1.1.2"/>
    </reaction>
</comment>
<comment type="subunit">
    <text evidence="1">Homodimer.</text>
</comment>
<comment type="subcellular location">
    <subcellularLocation>
        <location evidence="1">Cytoplasm</location>
    </subcellularLocation>
</comment>
<comment type="similarity">
    <text evidence="1">Belongs to the class-I aminoacyl-tRNA synthetase family.</text>
</comment>
<organism>
    <name type="scientific">Streptomyces avermitilis (strain ATCC 31267 / DSM 46492 / JCM 5070 / NBRC 14893 / NCIMB 12804 / NRRL 8165 / MA-4680)</name>
    <dbReference type="NCBI Taxonomy" id="227882"/>
    <lineage>
        <taxon>Bacteria</taxon>
        <taxon>Bacillati</taxon>
        <taxon>Actinomycetota</taxon>
        <taxon>Actinomycetes</taxon>
        <taxon>Kitasatosporales</taxon>
        <taxon>Streptomycetaceae</taxon>
        <taxon>Streptomyces</taxon>
    </lineage>
</organism>
<evidence type="ECO:0000255" key="1">
    <source>
        <dbReference type="HAMAP-Rule" id="MF_00140"/>
    </source>
</evidence>
<name>SYW2_STRAW</name>